<protein>
    <recommendedName>
        <fullName evidence="2">Protein Spindly</fullName>
    </recommendedName>
    <alternativeName>
        <fullName evidence="2">Coiled-coil domain-containing protein 99</fullName>
    </alternativeName>
    <alternativeName>
        <fullName evidence="2">Spindle apparatus coiled-coil domain-containing protein 1</fullName>
    </alternativeName>
</protein>
<comment type="function">
    <text evidence="1 2">Required for the localization of dynein and dynactin to the mitotic kintochore. Dynein is believed to control the initial lateral interaction between the kinetochore and spindle microtubules and to facilitate the subsequent formation of end-on kinetochore-microtubule attachments mediated by the NDC80 complex. Also required for correct spindle orientation. Does not appear to be required for the removal of spindle assembly checkpoint (SAC) proteins from the kinetochore upon bipolar spindle attachment. Acts as an adapter protein linking the dynein motor complex to various cargos and converts dynein from a non-processive to a highly processive motor in the presence of dynactin. Facilitates the interaction between dynein and dynactin and activates dynein processivity (the ability to move along a microtubule for a long distance without falling off the track) (By similarity). Plays a role in cell migration (By similarity).</text>
</comment>
<comment type="subunit">
    <text evidence="1 2">Interacts with KNTC1 and ZW10. These interactions appear weak and may be transient or indirect. Interacts with dynein intermediate chain and dynactin (DCTN1) (By similarity). Interacts with the catalytically active form of USP45 (By similarity).</text>
</comment>
<comment type="subcellular location">
    <subcellularLocation>
        <location evidence="2">Cytoplasm</location>
        <location evidence="2">Cytoskeleton</location>
        <location evidence="2">Microtubule organizing center</location>
        <location evidence="2">Centrosome</location>
    </subcellularLocation>
    <subcellularLocation>
        <location evidence="2">Chromosome</location>
        <location evidence="2">Centromere</location>
        <location evidence="2">Kinetochore</location>
    </subcellularLocation>
    <subcellularLocation>
        <location>Nucleus</location>
    </subcellularLocation>
    <subcellularLocation>
        <location evidence="2">Cytoplasm</location>
        <location evidence="2">Cytoskeleton</location>
        <location evidence="2">Spindle pole</location>
    </subcellularLocation>
    <text evidence="2">Localizes to the nucleus in interphase and to the kinetochore in early prometaphase. Relocalizes to the mitotic spindle pole before metaphase and is subsequently lost from the spindle poles after chromosome congression is completed. Removal of this protein from the kinetochore requires the dynein/dynactin complex.</text>
</comment>
<comment type="PTM">
    <text evidence="1">Monoubiquitinated with'Lys-48' linkage (By similarity). Deubiquitinated by USP45 (By similarity).</text>
</comment>
<comment type="similarity">
    <text evidence="2">Belongs to the Spindly family.</text>
</comment>
<sequence length="608" mass="70237">MEADITNLRNKLKECEDERLKAAHYGLQLLERQTELQSQLDKCHEEMMITAEKYNQEKHALQREVELKSRMLDSLSCECEALKQQQKAQLEQLEVQLHRSHRQEVSDLKNKLENLKVELDEARLGEKQLKQKLDLQGELLAHKSEELRLLSEQRVLSSMSSELLALETELTAAEGVKNALKEEVNELQYKQEQLECLNTSLLHQVDRLKEEKEEREREAVSYYNALEKARVENQDLQVQLGHALQQAADPNSKGNSLFAEVEDRRVAMERQLNLMKDKYQSLKKQNAFTRDQMNKMKLQISTLLRMRGSQTEFEQQERLFAMIEQKNGEIKHLLGEINKLEKFKNLYESMESRPSTSDTACVLEDSTYYSDLLQLKLDKLNKENESTKDELSIQRMKALFESQRALDIERKLFTNERHLQLSESENMKLRAKLDELKLKYEPEERIEVPVLKRRREVLPLNITTPEETEETAAASATEDGVSRLPPHREEESCLNSLKDNTVQWKQPASSCVQPASLSPHKNLHLDTQPKKEKKCVKLVDSPANIEVLHEQSGNTPNSPRLTAESKLPTEVKERIETTSKLGKGACKKSHNIIYVSSKSAPETQCSQQ</sequence>
<proteinExistence type="evidence at protein level"/>
<evidence type="ECO:0000250" key="1">
    <source>
        <dbReference type="UniProtKB" id="Q96EA4"/>
    </source>
</evidence>
<evidence type="ECO:0000255" key="2">
    <source>
        <dbReference type="HAMAP-Rule" id="MF_03041"/>
    </source>
</evidence>
<evidence type="ECO:0000256" key="3">
    <source>
        <dbReference type="SAM" id="MobiDB-lite"/>
    </source>
</evidence>
<evidence type="ECO:0000305" key="4"/>
<evidence type="ECO:0007744" key="5">
    <source>
    </source>
</evidence>
<accession>Q923A2</accession>
<accession>Q5DY45</accession>
<keyword id="KW-0007">Acetylation</keyword>
<keyword id="KW-0131">Cell cycle</keyword>
<keyword id="KW-0132">Cell division</keyword>
<keyword id="KW-0137">Centromere</keyword>
<keyword id="KW-0158">Chromosome</keyword>
<keyword id="KW-0175">Coiled coil</keyword>
<keyword id="KW-0963">Cytoplasm</keyword>
<keyword id="KW-0206">Cytoskeleton</keyword>
<keyword id="KW-0995">Kinetochore</keyword>
<keyword id="KW-0498">Mitosis</keyword>
<keyword id="KW-0539">Nucleus</keyword>
<keyword id="KW-0597">Phosphoprotein</keyword>
<keyword id="KW-1185">Reference proteome</keyword>
<keyword id="KW-0832">Ubl conjugation</keyword>
<reference key="1">
    <citation type="journal article" date="2005" name="Science">
        <title>The transcriptional landscape of the mammalian genome.</title>
        <authorList>
            <person name="Carninci P."/>
            <person name="Kasukawa T."/>
            <person name="Katayama S."/>
            <person name="Gough J."/>
            <person name="Frith M.C."/>
            <person name="Maeda N."/>
            <person name="Oyama R."/>
            <person name="Ravasi T."/>
            <person name="Lenhard B."/>
            <person name="Wells C."/>
            <person name="Kodzius R."/>
            <person name="Shimokawa K."/>
            <person name="Bajic V.B."/>
            <person name="Brenner S.E."/>
            <person name="Batalov S."/>
            <person name="Forrest A.R."/>
            <person name="Zavolan M."/>
            <person name="Davis M.J."/>
            <person name="Wilming L.G."/>
            <person name="Aidinis V."/>
            <person name="Allen J.E."/>
            <person name="Ambesi-Impiombato A."/>
            <person name="Apweiler R."/>
            <person name="Aturaliya R.N."/>
            <person name="Bailey T.L."/>
            <person name="Bansal M."/>
            <person name="Baxter L."/>
            <person name="Beisel K.W."/>
            <person name="Bersano T."/>
            <person name="Bono H."/>
            <person name="Chalk A.M."/>
            <person name="Chiu K.P."/>
            <person name="Choudhary V."/>
            <person name="Christoffels A."/>
            <person name="Clutterbuck D.R."/>
            <person name="Crowe M.L."/>
            <person name="Dalla E."/>
            <person name="Dalrymple B.P."/>
            <person name="de Bono B."/>
            <person name="Della Gatta G."/>
            <person name="di Bernardo D."/>
            <person name="Down T."/>
            <person name="Engstrom P."/>
            <person name="Fagiolini M."/>
            <person name="Faulkner G."/>
            <person name="Fletcher C.F."/>
            <person name="Fukushima T."/>
            <person name="Furuno M."/>
            <person name="Futaki S."/>
            <person name="Gariboldi M."/>
            <person name="Georgii-Hemming P."/>
            <person name="Gingeras T.R."/>
            <person name="Gojobori T."/>
            <person name="Green R.E."/>
            <person name="Gustincich S."/>
            <person name="Harbers M."/>
            <person name="Hayashi Y."/>
            <person name="Hensch T.K."/>
            <person name="Hirokawa N."/>
            <person name="Hill D."/>
            <person name="Huminiecki L."/>
            <person name="Iacono M."/>
            <person name="Ikeo K."/>
            <person name="Iwama A."/>
            <person name="Ishikawa T."/>
            <person name="Jakt M."/>
            <person name="Kanapin A."/>
            <person name="Katoh M."/>
            <person name="Kawasawa Y."/>
            <person name="Kelso J."/>
            <person name="Kitamura H."/>
            <person name="Kitano H."/>
            <person name="Kollias G."/>
            <person name="Krishnan S.P."/>
            <person name="Kruger A."/>
            <person name="Kummerfeld S.K."/>
            <person name="Kurochkin I.V."/>
            <person name="Lareau L.F."/>
            <person name="Lazarevic D."/>
            <person name="Lipovich L."/>
            <person name="Liu J."/>
            <person name="Liuni S."/>
            <person name="McWilliam S."/>
            <person name="Madan Babu M."/>
            <person name="Madera M."/>
            <person name="Marchionni L."/>
            <person name="Matsuda H."/>
            <person name="Matsuzawa S."/>
            <person name="Miki H."/>
            <person name="Mignone F."/>
            <person name="Miyake S."/>
            <person name="Morris K."/>
            <person name="Mottagui-Tabar S."/>
            <person name="Mulder N."/>
            <person name="Nakano N."/>
            <person name="Nakauchi H."/>
            <person name="Ng P."/>
            <person name="Nilsson R."/>
            <person name="Nishiguchi S."/>
            <person name="Nishikawa S."/>
            <person name="Nori F."/>
            <person name="Ohara O."/>
            <person name="Okazaki Y."/>
            <person name="Orlando V."/>
            <person name="Pang K.C."/>
            <person name="Pavan W.J."/>
            <person name="Pavesi G."/>
            <person name="Pesole G."/>
            <person name="Petrovsky N."/>
            <person name="Piazza S."/>
            <person name="Reed J."/>
            <person name="Reid J.F."/>
            <person name="Ring B.Z."/>
            <person name="Ringwald M."/>
            <person name="Rost B."/>
            <person name="Ruan Y."/>
            <person name="Salzberg S.L."/>
            <person name="Sandelin A."/>
            <person name="Schneider C."/>
            <person name="Schoenbach C."/>
            <person name="Sekiguchi K."/>
            <person name="Semple C.A."/>
            <person name="Seno S."/>
            <person name="Sessa L."/>
            <person name="Sheng Y."/>
            <person name="Shibata Y."/>
            <person name="Shimada H."/>
            <person name="Shimada K."/>
            <person name="Silva D."/>
            <person name="Sinclair B."/>
            <person name="Sperling S."/>
            <person name="Stupka E."/>
            <person name="Sugiura K."/>
            <person name="Sultana R."/>
            <person name="Takenaka Y."/>
            <person name="Taki K."/>
            <person name="Tammoja K."/>
            <person name="Tan S.L."/>
            <person name="Tang S."/>
            <person name="Taylor M.S."/>
            <person name="Tegner J."/>
            <person name="Teichmann S.A."/>
            <person name="Ueda H.R."/>
            <person name="van Nimwegen E."/>
            <person name="Verardo R."/>
            <person name="Wei C.L."/>
            <person name="Yagi K."/>
            <person name="Yamanishi H."/>
            <person name="Zabarovsky E."/>
            <person name="Zhu S."/>
            <person name="Zimmer A."/>
            <person name="Hide W."/>
            <person name="Bult C."/>
            <person name="Grimmond S.M."/>
            <person name="Teasdale R.D."/>
            <person name="Liu E.T."/>
            <person name="Brusic V."/>
            <person name="Quackenbush J."/>
            <person name="Wahlestedt C."/>
            <person name="Mattick J.S."/>
            <person name="Hume D.A."/>
            <person name="Kai C."/>
            <person name="Sasaki D."/>
            <person name="Tomaru Y."/>
            <person name="Fukuda S."/>
            <person name="Kanamori-Katayama M."/>
            <person name="Suzuki M."/>
            <person name="Aoki J."/>
            <person name="Arakawa T."/>
            <person name="Iida J."/>
            <person name="Imamura K."/>
            <person name="Itoh M."/>
            <person name="Kato T."/>
            <person name="Kawaji H."/>
            <person name="Kawagashira N."/>
            <person name="Kawashima T."/>
            <person name="Kojima M."/>
            <person name="Kondo S."/>
            <person name="Konno H."/>
            <person name="Nakano K."/>
            <person name="Ninomiya N."/>
            <person name="Nishio T."/>
            <person name="Okada M."/>
            <person name="Plessy C."/>
            <person name="Shibata K."/>
            <person name="Shiraki T."/>
            <person name="Suzuki S."/>
            <person name="Tagami M."/>
            <person name="Waki K."/>
            <person name="Watahiki A."/>
            <person name="Okamura-Oho Y."/>
            <person name="Suzuki H."/>
            <person name="Kawai J."/>
            <person name="Hayashizaki Y."/>
        </authorList>
    </citation>
    <scope>NUCLEOTIDE SEQUENCE [LARGE SCALE MRNA]</scope>
    <source>
        <strain>C57BL/6J</strain>
        <tissue>Egg</tissue>
    </source>
</reference>
<reference key="2">
    <citation type="journal article" date="2009" name="PLoS Biol.">
        <title>Lineage-specific biology revealed by a finished genome assembly of the mouse.</title>
        <authorList>
            <person name="Church D.M."/>
            <person name="Goodstadt L."/>
            <person name="Hillier L.W."/>
            <person name="Zody M.C."/>
            <person name="Goldstein S."/>
            <person name="She X."/>
            <person name="Bult C.J."/>
            <person name="Agarwala R."/>
            <person name="Cherry J.L."/>
            <person name="DiCuccio M."/>
            <person name="Hlavina W."/>
            <person name="Kapustin Y."/>
            <person name="Meric P."/>
            <person name="Maglott D."/>
            <person name="Birtle Z."/>
            <person name="Marques A.C."/>
            <person name="Graves T."/>
            <person name="Zhou S."/>
            <person name="Teague B."/>
            <person name="Potamousis K."/>
            <person name="Churas C."/>
            <person name="Place M."/>
            <person name="Herschleb J."/>
            <person name="Runnheim R."/>
            <person name="Forrest D."/>
            <person name="Amos-Landgraf J."/>
            <person name="Schwartz D.C."/>
            <person name="Cheng Z."/>
            <person name="Lindblad-Toh K."/>
            <person name="Eichler E.E."/>
            <person name="Ponting C.P."/>
        </authorList>
    </citation>
    <scope>NUCLEOTIDE SEQUENCE [LARGE SCALE GENOMIC DNA]</scope>
    <source>
        <strain>C57BL/6J</strain>
    </source>
</reference>
<reference key="3">
    <citation type="journal article" date="2004" name="Genome Res.">
        <title>The status, quality, and expansion of the NIH full-length cDNA project: the Mammalian Gene Collection (MGC).</title>
        <authorList>
            <consortium name="The MGC Project Team"/>
        </authorList>
    </citation>
    <scope>NUCLEOTIDE SEQUENCE [LARGE SCALE MRNA]</scope>
    <source>
        <strain>FVB/N</strain>
        <tissue>Mammary tumor</tissue>
    </source>
</reference>
<reference key="4">
    <citation type="journal article" date="2009" name="Immunity">
        <title>The phagosomal proteome in interferon-gamma-activated macrophages.</title>
        <authorList>
            <person name="Trost M."/>
            <person name="English L."/>
            <person name="Lemieux S."/>
            <person name="Courcelles M."/>
            <person name="Desjardins M."/>
            <person name="Thibault P."/>
        </authorList>
    </citation>
    <scope>IDENTIFICATION BY MASS SPECTROMETRY [LARGE SCALE ANALYSIS]</scope>
</reference>
<reference key="5">
    <citation type="journal article" date="2010" name="Cell">
        <title>A tissue-specific atlas of mouse protein phosphorylation and expression.</title>
        <authorList>
            <person name="Huttlin E.L."/>
            <person name="Jedrychowski M.P."/>
            <person name="Elias J.E."/>
            <person name="Goswami T."/>
            <person name="Rad R."/>
            <person name="Beausoleil S.A."/>
            <person name="Villen J."/>
            <person name="Haas W."/>
            <person name="Sowa M.E."/>
            <person name="Gygi S.P."/>
        </authorList>
    </citation>
    <scope>PHOSPHORYLATION [LARGE SCALE ANALYSIS] AT SER-558</scope>
    <scope>IDENTIFICATION BY MASS SPECTROMETRY [LARGE SCALE ANALYSIS]</scope>
    <source>
        <tissue>Lung</tissue>
        <tissue>Spleen</tissue>
    </source>
</reference>
<feature type="chain" id="PRO_0000274518" description="Protein Spindly">
    <location>
        <begin position="1"/>
        <end position="608"/>
    </location>
</feature>
<feature type="region of interest" description="Disordered" evidence="3">
    <location>
        <begin position="465"/>
        <end position="487"/>
    </location>
</feature>
<feature type="coiled-coil region" evidence="2">
    <location>
        <begin position="1"/>
        <end position="445"/>
    </location>
</feature>
<feature type="modified residue" description="N-acetylmethionine" evidence="1">
    <location>
        <position position="1"/>
    </location>
</feature>
<feature type="modified residue" description="Phosphoserine" evidence="1">
    <location>
        <position position="516"/>
    </location>
</feature>
<feature type="modified residue" description="Phosphoserine" evidence="1">
    <location>
        <position position="518"/>
    </location>
</feature>
<feature type="modified residue" description="Phosphoserine" evidence="5">
    <location>
        <position position="558"/>
    </location>
</feature>
<feature type="sequence conflict" description="In Ref. 3; AAH06674." evidence="4" ref="3">
    <original>E</original>
    <variation>Q</variation>
    <location>
        <position position="167"/>
    </location>
</feature>
<gene>
    <name type="primary">Spdl1</name>
    <name type="synonym">Ccdc99</name>
</gene>
<dbReference type="EMBL" id="AK139553">
    <property type="protein sequence ID" value="BAE24059.1"/>
    <property type="molecule type" value="mRNA"/>
</dbReference>
<dbReference type="EMBL" id="CR392356">
    <property type="status" value="NOT_ANNOTATED_CDS"/>
    <property type="molecule type" value="Genomic_DNA"/>
</dbReference>
<dbReference type="EMBL" id="BC006674">
    <property type="protein sequence ID" value="AAH06674.1"/>
    <property type="molecule type" value="mRNA"/>
</dbReference>
<dbReference type="CCDS" id="CCDS24541.1"/>
<dbReference type="RefSeq" id="NP_081687.2">
    <property type="nucleotide sequence ID" value="NM_027411.2"/>
</dbReference>
<dbReference type="RefSeq" id="XP_006534232.1">
    <property type="nucleotide sequence ID" value="XM_006534169.3"/>
</dbReference>
<dbReference type="SMR" id="Q923A2"/>
<dbReference type="BioGRID" id="214018">
    <property type="interactions" value="2"/>
</dbReference>
<dbReference type="FunCoup" id="Q923A2">
    <property type="interactions" value="1980"/>
</dbReference>
<dbReference type="STRING" id="10090.ENSMUSP00000090882"/>
<dbReference type="iPTMnet" id="Q923A2"/>
<dbReference type="PhosphoSitePlus" id="Q923A2"/>
<dbReference type="SwissPalm" id="Q923A2"/>
<dbReference type="jPOST" id="Q923A2"/>
<dbReference type="PaxDb" id="10090-ENSMUSP00000090882"/>
<dbReference type="PeptideAtlas" id="Q923A2"/>
<dbReference type="ProteomicsDB" id="257307"/>
<dbReference type="Pumba" id="Q923A2"/>
<dbReference type="Antibodypedia" id="28760">
    <property type="antibodies" value="235 antibodies from 30 providers"/>
</dbReference>
<dbReference type="DNASU" id="70385"/>
<dbReference type="Ensembl" id="ENSMUST00000093191.3">
    <property type="protein sequence ID" value="ENSMUSP00000090882.3"/>
    <property type="gene ID" value="ENSMUSG00000069910.3"/>
</dbReference>
<dbReference type="GeneID" id="70385"/>
<dbReference type="KEGG" id="mmu:70385"/>
<dbReference type="UCSC" id="uc007ilc.2">
    <property type="organism name" value="mouse"/>
</dbReference>
<dbReference type="AGR" id="MGI:1917635"/>
<dbReference type="CTD" id="54908"/>
<dbReference type="MGI" id="MGI:1917635">
    <property type="gene designation" value="Spdl1"/>
</dbReference>
<dbReference type="VEuPathDB" id="HostDB:ENSMUSG00000069910"/>
<dbReference type="eggNOG" id="ENOG502S27G">
    <property type="taxonomic scope" value="Eukaryota"/>
</dbReference>
<dbReference type="GeneTree" id="ENSGT00510000047951"/>
<dbReference type="HOGENOM" id="CLU_031713_0_0_1"/>
<dbReference type="InParanoid" id="Q923A2"/>
<dbReference type="OMA" id="KQHAFTK"/>
<dbReference type="OrthoDB" id="2121607at2759"/>
<dbReference type="PhylomeDB" id="Q923A2"/>
<dbReference type="TreeFam" id="TF332470"/>
<dbReference type="Reactome" id="R-MMU-141444">
    <property type="pathway name" value="Amplification of signal from unattached kinetochores via a MAD2 inhibitory signal"/>
</dbReference>
<dbReference type="Reactome" id="R-MMU-2467813">
    <property type="pathway name" value="Separation of Sister Chromatids"/>
</dbReference>
<dbReference type="Reactome" id="R-MMU-2500257">
    <property type="pathway name" value="Resolution of Sister Chromatid Cohesion"/>
</dbReference>
<dbReference type="Reactome" id="R-MMU-5663220">
    <property type="pathway name" value="RHO GTPases Activate Formins"/>
</dbReference>
<dbReference type="Reactome" id="R-MMU-68877">
    <property type="pathway name" value="Mitotic Prometaphase"/>
</dbReference>
<dbReference type="Reactome" id="R-MMU-9648025">
    <property type="pathway name" value="EML4 and NUDC in mitotic spindle formation"/>
</dbReference>
<dbReference type="BioGRID-ORCS" id="70385">
    <property type="hits" value="22 hits in 79 CRISPR screens"/>
</dbReference>
<dbReference type="ChiTaRS" id="Spdl1">
    <property type="organism name" value="mouse"/>
</dbReference>
<dbReference type="PRO" id="PR:Q923A2"/>
<dbReference type="Proteomes" id="UP000000589">
    <property type="component" value="Chromosome 11"/>
</dbReference>
<dbReference type="RNAct" id="Q923A2">
    <property type="molecule type" value="protein"/>
</dbReference>
<dbReference type="Bgee" id="ENSMUSG00000069910">
    <property type="expression patterns" value="Expressed in glomerular capsule and 167 other cell types or tissues"/>
</dbReference>
<dbReference type="GO" id="GO:0005813">
    <property type="term" value="C:centrosome"/>
    <property type="evidence" value="ECO:0007669"/>
    <property type="project" value="UniProtKB-SubCell"/>
</dbReference>
<dbReference type="GO" id="GO:0005737">
    <property type="term" value="C:cytoplasm"/>
    <property type="evidence" value="ECO:0007669"/>
    <property type="project" value="UniProtKB-KW"/>
</dbReference>
<dbReference type="GO" id="GO:0005634">
    <property type="term" value="C:nucleus"/>
    <property type="evidence" value="ECO:0000250"/>
    <property type="project" value="UniProtKB"/>
</dbReference>
<dbReference type="GO" id="GO:0000940">
    <property type="term" value="C:outer kinetochore"/>
    <property type="evidence" value="ECO:0000250"/>
    <property type="project" value="UniProtKB"/>
</dbReference>
<dbReference type="GO" id="GO:0000922">
    <property type="term" value="C:spindle pole"/>
    <property type="evidence" value="ECO:0000250"/>
    <property type="project" value="UniProtKB"/>
</dbReference>
<dbReference type="GO" id="GO:0019899">
    <property type="term" value="F:enzyme binding"/>
    <property type="evidence" value="ECO:0007669"/>
    <property type="project" value="Ensembl"/>
</dbReference>
<dbReference type="GO" id="GO:0043515">
    <property type="term" value="F:kinetochore binding"/>
    <property type="evidence" value="ECO:0000250"/>
    <property type="project" value="UniProtKB"/>
</dbReference>
<dbReference type="GO" id="GO:0051301">
    <property type="term" value="P:cell division"/>
    <property type="evidence" value="ECO:0007669"/>
    <property type="project" value="UniProtKB-KW"/>
</dbReference>
<dbReference type="GO" id="GO:0016477">
    <property type="term" value="P:cell migration"/>
    <property type="evidence" value="ECO:0000250"/>
    <property type="project" value="UniProtKB"/>
</dbReference>
<dbReference type="GO" id="GO:0000132">
    <property type="term" value="P:establishment of mitotic spindle orientation"/>
    <property type="evidence" value="ECO:0000250"/>
    <property type="project" value="UniProtKB"/>
</dbReference>
<dbReference type="GO" id="GO:0007080">
    <property type="term" value="P:mitotic metaphase chromosome alignment"/>
    <property type="evidence" value="ECO:0000250"/>
    <property type="project" value="UniProtKB"/>
</dbReference>
<dbReference type="GO" id="GO:0007094">
    <property type="term" value="P:mitotic spindle assembly checkpoint signaling"/>
    <property type="evidence" value="ECO:0007669"/>
    <property type="project" value="InterPro"/>
</dbReference>
<dbReference type="GO" id="GO:0034501">
    <property type="term" value="P:protein localization to kinetochore"/>
    <property type="evidence" value="ECO:0000250"/>
    <property type="project" value="UniProtKB"/>
</dbReference>
<dbReference type="HAMAP" id="MF_03041">
    <property type="entry name" value="SPDLY"/>
    <property type="match status" value="1"/>
</dbReference>
<dbReference type="InterPro" id="IPR028593">
    <property type="entry name" value="SPDLY_chordates"/>
</dbReference>
<dbReference type="InterPro" id="IPR051149">
    <property type="entry name" value="Spindly/BICDR_Dynein_Adapter"/>
</dbReference>
<dbReference type="PANTHER" id="PTHR32123">
    <property type="entry name" value="BICD FAMILY-LIKE CARGO ADAPTER"/>
    <property type="match status" value="1"/>
</dbReference>
<dbReference type="PANTHER" id="PTHR32123:SF9">
    <property type="entry name" value="PROTEIN SPINDLY"/>
    <property type="match status" value="1"/>
</dbReference>
<name>SPDLY_MOUSE</name>
<organism>
    <name type="scientific">Mus musculus</name>
    <name type="common">Mouse</name>
    <dbReference type="NCBI Taxonomy" id="10090"/>
    <lineage>
        <taxon>Eukaryota</taxon>
        <taxon>Metazoa</taxon>
        <taxon>Chordata</taxon>
        <taxon>Craniata</taxon>
        <taxon>Vertebrata</taxon>
        <taxon>Euteleostomi</taxon>
        <taxon>Mammalia</taxon>
        <taxon>Eutheria</taxon>
        <taxon>Euarchontoglires</taxon>
        <taxon>Glires</taxon>
        <taxon>Rodentia</taxon>
        <taxon>Myomorpha</taxon>
        <taxon>Muroidea</taxon>
        <taxon>Muridae</taxon>
        <taxon>Murinae</taxon>
        <taxon>Mus</taxon>
        <taxon>Mus</taxon>
    </lineage>
</organism>